<comment type="function">
    <text evidence="1">Catalyzes the initial step of the lipid cycle reactions in the biosynthesis of the cell wall peptidoglycan: transfers peptidoglycan precursor phospho-MurNAc-pentapeptide from UDP-MurNAc-pentapeptide onto the lipid carrier undecaprenyl phosphate, yielding undecaprenyl-pyrophosphoryl-MurNAc-pentapeptide, known as lipid I.</text>
</comment>
<comment type="catalytic activity">
    <reaction evidence="1">
        <text>UDP-N-acetyl-alpha-D-muramoyl-L-alanyl-gamma-D-glutamyl-meso-2,6-diaminopimeloyl-D-alanyl-D-alanine + di-trans,octa-cis-undecaprenyl phosphate = di-trans,octa-cis-undecaprenyl diphospho-N-acetyl-alpha-D-muramoyl-L-alanyl-D-glutamyl-meso-2,6-diaminopimeloyl-D-alanyl-D-alanine + UMP</text>
        <dbReference type="Rhea" id="RHEA:28386"/>
        <dbReference type="ChEBI" id="CHEBI:57865"/>
        <dbReference type="ChEBI" id="CHEBI:60392"/>
        <dbReference type="ChEBI" id="CHEBI:61386"/>
        <dbReference type="ChEBI" id="CHEBI:61387"/>
        <dbReference type="EC" id="2.7.8.13"/>
    </reaction>
</comment>
<comment type="cofactor">
    <cofactor evidence="1">
        <name>Mg(2+)</name>
        <dbReference type="ChEBI" id="CHEBI:18420"/>
    </cofactor>
</comment>
<comment type="pathway">
    <text evidence="1">Cell wall biogenesis; peptidoglycan biosynthesis.</text>
</comment>
<comment type="subcellular location">
    <subcellularLocation>
        <location evidence="1">Cell inner membrane</location>
        <topology evidence="1">Multi-pass membrane protein</topology>
    </subcellularLocation>
</comment>
<comment type="similarity">
    <text evidence="1">Belongs to the glycosyltransferase 4 family. MraY subfamily.</text>
</comment>
<accession>B0VPG4</accession>
<evidence type="ECO:0000255" key="1">
    <source>
        <dbReference type="HAMAP-Rule" id="MF_00038"/>
    </source>
</evidence>
<keyword id="KW-0131">Cell cycle</keyword>
<keyword id="KW-0132">Cell division</keyword>
<keyword id="KW-0997">Cell inner membrane</keyword>
<keyword id="KW-1003">Cell membrane</keyword>
<keyword id="KW-0133">Cell shape</keyword>
<keyword id="KW-0961">Cell wall biogenesis/degradation</keyword>
<keyword id="KW-0460">Magnesium</keyword>
<keyword id="KW-0472">Membrane</keyword>
<keyword id="KW-0479">Metal-binding</keyword>
<keyword id="KW-0573">Peptidoglycan synthesis</keyword>
<keyword id="KW-0808">Transferase</keyword>
<keyword id="KW-0812">Transmembrane</keyword>
<keyword id="KW-1133">Transmembrane helix</keyword>
<reference key="1">
    <citation type="journal article" date="2008" name="PLoS ONE">
        <title>Comparative analysis of Acinetobacters: three genomes for three lifestyles.</title>
        <authorList>
            <person name="Vallenet D."/>
            <person name="Nordmann P."/>
            <person name="Barbe V."/>
            <person name="Poirel L."/>
            <person name="Mangenot S."/>
            <person name="Bataille E."/>
            <person name="Dossat C."/>
            <person name="Gas S."/>
            <person name="Kreimeyer A."/>
            <person name="Lenoble P."/>
            <person name="Oztas S."/>
            <person name="Poulain J."/>
            <person name="Segurens B."/>
            <person name="Robert C."/>
            <person name="Abergel C."/>
            <person name="Claverie J.-M."/>
            <person name="Raoult D."/>
            <person name="Medigue C."/>
            <person name="Weissenbach J."/>
            <person name="Cruveiller S."/>
        </authorList>
    </citation>
    <scope>NUCLEOTIDE SEQUENCE [LARGE SCALE GENOMIC DNA]</scope>
    <source>
        <strain>SDF</strain>
    </source>
</reference>
<dbReference type="EC" id="2.7.8.13" evidence="1"/>
<dbReference type="EMBL" id="CU468230">
    <property type="protein sequence ID" value="CAO99682.1"/>
    <property type="molecule type" value="Genomic_DNA"/>
</dbReference>
<dbReference type="SMR" id="B0VPG4"/>
<dbReference type="KEGG" id="abm:ABSDF0287"/>
<dbReference type="HOGENOM" id="CLU_023982_0_0_6"/>
<dbReference type="UniPathway" id="UPA00219"/>
<dbReference type="Proteomes" id="UP000001741">
    <property type="component" value="Chromosome"/>
</dbReference>
<dbReference type="GO" id="GO:0005886">
    <property type="term" value="C:plasma membrane"/>
    <property type="evidence" value="ECO:0007669"/>
    <property type="project" value="UniProtKB-SubCell"/>
</dbReference>
<dbReference type="GO" id="GO:0046872">
    <property type="term" value="F:metal ion binding"/>
    <property type="evidence" value="ECO:0007669"/>
    <property type="project" value="UniProtKB-KW"/>
</dbReference>
<dbReference type="GO" id="GO:0008963">
    <property type="term" value="F:phospho-N-acetylmuramoyl-pentapeptide-transferase activity"/>
    <property type="evidence" value="ECO:0007669"/>
    <property type="project" value="UniProtKB-UniRule"/>
</dbReference>
<dbReference type="GO" id="GO:0051992">
    <property type="term" value="F:UDP-N-acetylmuramoyl-L-alanyl-D-glutamyl-meso-2,6-diaminopimelyl-D-alanyl-D-alanine:undecaprenyl-phosphate transferase activity"/>
    <property type="evidence" value="ECO:0007669"/>
    <property type="project" value="RHEA"/>
</dbReference>
<dbReference type="GO" id="GO:0051301">
    <property type="term" value="P:cell division"/>
    <property type="evidence" value="ECO:0007669"/>
    <property type="project" value="UniProtKB-KW"/>
</dbReference>
<dbReference type="GO" id="GO:0071555">
    <property type="term" value="P:cell wall organization"/>
    <property type="evidence" value="ECO:0007669"/>
    <property type="project" value="UniProtKB-KW"/>
</dbReference>
<dbReference type="GO" id="GO:0009252">
    <property type="term" value="P:peptidoglycan biosynthetic process"/>
    <property type="evidence" value="ECO:0007669"/>
    <property type="project" value="UniProtKB-UniRule"/>
</dbReference>
<dbReference type="GO" id="GO:0008360">
    <property type="term" value="P:regulation of cell shape"/>
    <property type="evidence" value="ECO:0007669"/>
    <property type="project" value="UniProtKB-KW"/>
</dbReference>
<dbReference type="CDD" id="cd06852">
    <property type="entry name" value="GT_MraY"/>
    <property type="match status" value="1"/>
</dbReference>
<dbReference type="HAMAP" id="MF_00038">
    <property type="entry name" value="MraY"/>
    <property type="match status" value="1"/>
</dbReference>
<dbReference type="InterPro" id="IPR000715">
    <property type="entry name" value="Glycosyl_transferase_4"/>
</dbReference>
<dbReference type="InterPro" id="IPR003524">
    <property type="entry name" value="PNAcMuramoyl-5peptid_Trfase"/>
</dbReference>
<dbReference type="InterPro" id="IPR018480">
    <property type="entry name" value="PNAcMuramoyl-5peptid_Trfase_CS"/>
</dbReference>
<dbReference type="NCBIfam" id="TIGR00445">
    <property type="entry name" value="mraY"/>
    <property type="match status" value="1"/>
</dbReference>
<dbReference type="PANTHER" id="PTHR22926">
    <property type="entry name" value="PHOSPHO-N-ACETYLMURAMOYL-PENTAPEPTIDE-TRANSFERASE"/>
    <property type="match status" value="1"/>
</dbReference>
<dbReference type="PANTHER" id="PTHR22926:SF5">
    <property type="entry name" value="PHOSPHO-N-ACETYLMURAMOYL-PENTAPEPTIDE-TRANSFERASE HOMOLOG"/>
    <property type="match status" value="1"/>
</dbReference>
<dbReference type="Pfam" id="PF00953">
    <property type="entry name" value="Glycos_transf_4"/>
    <property type="match status" value="1"/>
</dbReference>
<dbReference type="PROSITE" id="PS01347">
    <property type="entry name" value="MRAY_1"/>
    <property type="match status" value="1"/>
</dbReference>
<dbReference type="PROSITE" id="PS01348">
    <property type="entry name" value="MRAY_2"/>
    <property type="match status" value="1"/>
</dbReference>
<proteinExistence type="inferred from homology"/>
<organism>
    <name type="scientific">Acinetobacter baumannii (strain SDF)</name>
    <dbReference type="NCBI Taxonomy" id="509170"/>
    <lineage>
        <taxon>Bacteria</taxon>
        <taxon>Pseudomonadati</taxon>
        <taxon>Pseudomonadota</taxon>
        <taxon>Gammaproteobacteria</taxon>
        <taxon>Moraxellales</taxon>
        <taxon>Moraxellaceae</taxon>
        <taxon>Acinetobacter</taxon>
        <taxon>Acinetobacter calcoaceticus/baumannii complex</taxon>
    </lineage>
</organism>
<sequence>MLLWLFEQLAGYHSSFQVVRYLTLRSLLSVLTSLTIGLVLGPIMIRKLQALKYGQAVSSFAPENHAKKMGTPTMGGILILLSIGISTLLWADLSNPYVWIVLGVMVVFGAVGWADDWIKIRYKDNAGLPARKKFFWTSVASLGAGIALYLIATQQSNAEYTANMLDLLIPFFKNLSIPLSIVPLGLAFIVFTYLVINGASNAVNLTDGLDGLAIMPVVMVATGLGVFAYLSGDIRFANYLHIPYVKYTSELVVICSAMIGAGLAFLWYNAHPAQVFMGDVGALALGAMLGTIAVMVRQEIVFAIMGGVFVMEAVSVFLQIGSLRMRNKRVFLMAPLHHHYEKQGWKETQVVIRFWIITIMLVVLGLMTLKLR</sequence>
<name>MRAY_ACIBS</name>
<gene>
    <name evidence="1" type="primary">mraY</name>
    <name type="ordered locus">ABSDF0287</name>
</gene>
<protein>
    <recommendedName>
        <fullName evidence="1">Phospho-N-acetylmuramoyl-pentapeptide-transferase</fullName>
        <ecNumber evidence="1">2.7.8.13</ecNumber>
    </recommendedName>
    <alternativeName>
        <fullName evidence="1">UDP-MurNAc-pentapeptide phosphotransferase</fullName>
    </alternativeName>
</protein>
<feature type="chain" id="PRO_1000090581" description="Phospho-N-acetylmuramoyl-pentapeptide-transferase">
    <location>
        <begin position="1"/>
        <end position="372"/>
    </location>
</feature>
<feature type="transmembrane region" description="Helical" evidence="1">
    <location>
        <begin position="25"/>
        <end position="45"/>
    </location>
</feature>
<feature type="transmembrane region" description="Helical" evidence="1">
    <location>
        <begin position="73"/>
        <end position="93"/>
    </location>
</feature>
<feature type="transmembrane region" description="Helical" evidence="1">
    <location>
        <begin position="98"/>
        <end position="118"/>
    </location>
</feature>
<feature type="transmembrane region" description="Helical" evidence="1">
    <location>
        <begin position="134"/>
        <end position="154"/>
    </location>
</feature>
<feature type="transmembrane region" description="Helical" evidence="1">
    <location>
        <begin position="176"/>
        <end position="196"/>
    </location>
</feature>
<feature type="transmembrane region" description="Helical" evidence="1">
    <location>
        <begin position="211"/>
        <end position="231"/>
    </location>
</feature>
<feature type="transmembrane region" description="Helical" evidence="1">
    <location>
        <begin position="251"/>
        <end position="271"/>
    </location>
</feature>
<feature type="transmembrane region" description="Helical" evidence="1">
    <location>
        <begin position="275"/>
        <end position="295"/>
    </location>
</feature>
<feature type="transmembrane region" description="Helical" evidence="1">
    <location>
        <begin position="300"/>
        <end position="320"/>
    </location>
</feature>
<feature type="transmembrane region" description="Helical" evidence="1">
    <location>
        <begin position="349"/>
        <end position="369"/>
    </location>
</feature>